<comment type="function">
    <text>In muscle, parvalbumin is thought to be involved in relaxation after contraction. It binds two calcium ions.</text>
</comment>
<comment type="miscellaneous">
    <text>This parvalbumin has an isoelectric point of 4.25.</text>
</comment>
<comment type="similarity">
    <text evidence="4">Belongs to the parvalbumin family.</text>
</comment>
<proteinExistence type="evidence at protein level"/>
<dbReference type="PIR" id="A92133">
    <property type="entry name" value="PVCAB"/>
</dbReference>
<dbReference type="PDB" id="1B8C">
    <property type="method" value="X-ray"/>
    <property type="resolution" value="2.00 A"/>
    <property type="chains" value="A/B=1-108"/>
</dbReference>
<dbReference type="PDB" id="1B8L">
    <property type="method" value="X-ray"/>
    <property type="resolution" value="1.70 A"/>
    <property type="chains" value="A=1-108"/>
</dbReference>
<dbReference type="PDB" id="1B8R">
    <property type="method" value="X-ray"/>
    <property type="resolution" value="1.90 A"/>
    <property type="chains" value="A=1-108"/>
</dbReference>
<dbReference type="PDB" id="1B9A">
    <property type="method" value="X-ray"/>
    <property type="resolution" value="2.00 A"/>
    <property type="chains" value="A=1-108"/>
</dbReference>
<dbReference type="PDB" id="1CDP">
    <property type="method" value="X-ray"/>
    <property type="resolution" value="1.60 A"/>
    <property type="chains" value="A=1-108"/>
</dbReference>
<dbReference type="PDB" id="4CPV">
    <property type="method" value="X-ray"/>
    <property type="resolution" value="1.50 A"/>
    <property type="chains" value="A=1-108"/>
</dbReference>
<dbReference type="PDB" id="5CPV">
    <property type="method" value="X-ray"/>
    <property type="resolution" value="1.60 A"/>
    <property type="chains" value="A=1-108"/>
</dbReference>
<dbReference type="PDBsum" id="1B8C"/>
<dbReference type="PDBsum" id="1B8L"/>
<dbReference type="PDBsum" id="1B8R"/>
<dbReference type="PDBsum" id="1B9A"/>
<dbReference type="PDBsum" id="1CDP"/>
<dbReference type="PDBsum" id="4CPV"/>
<dbReference type="PDBsum" id="5CPV"/>
<dbReference type="SMR" id="P02618"/>
<dbReference type="Allergome" id="263">
    <property type="allergen name" value="Cyp c 1"/>
</dbReference>
<dbReference type="iPTMnet" id="P02618"/>
<dbReference type="EvolutionaryTrace" id="P02618"/>
<dbReference type="Proteomes" id="UP000694384">
    <property type="component" value="Unplaced"/>
</dbReference>
<dbReference type="Proteomes" id="UP000694427">
    <property type="component" value="Unplaced"/>
</dbReference>
<dbReference type="Proteomes" id="UP000694700">
    <property type="component" value="Unplaced"/>
</dbReference>
<dbReference type="Proteomes" id="UP000694701">
    <property type="component" value="Unplaced"/>
</dbReference>
<dbReference type="Proteomes" id="UP001155660">
    <property type="component" value="Unplaced"/>
</dbReference>
<dbReference type="GO" id="GO:0005737">
    <property type="term" value="C:cytoplasm"/>
    <property type="evidence" value="ECO:0007669"/>
    <property type="project" value="TreeGrafter"/>
</dbReference>
<dbReference type="GO" id="GO:0005509">
    <property type="term" value="F:calcium ion binding"/>
    <property type="evidence" value="ECO:0007669"/>
    <property type="project" value="InterPro"/>
</dbReference>
<dbReference type="CDD" id="cd16255">
    <property type="entry name" value="EFh_parvalbumin_beta"/>
    <property type="match status" value="1"/>
</dbReference>
<dbReference type="FunFam" id="1.10.238.10:FF:000060">
    <property type="entry name" value="Parvalbumin, thymic"/>
    <property type="match status" value="1"/>
</dbReference>
<dbReference type="Gene3D" id="1.10.238.10">
    <property type="entry name" value="EF-hand"/>
    <property type="match status" value="1"/>
</dbReference>
<dbReference type="InterPro" id="IPR011992">
    <property type="entry name" value="EF-hand-dom_pair"/>
</dbReference>
<dbReference type="InterPro" id="IPR018247">
    <property type="entry name" value="EF_Hand_1_Ca_BS"/>
</dbReference>
<dbReference type="InterPro" id="IPR002048">
    <property type="entry name" value="EF_hand_dom"/>
</dbReference>
<dbReference type="InterPro" id="IPR008080">
    <property type="entry name" value="Parvalbumin"/>
</dbReference>
<dbReference type="PANTHER" id="PTHR11653:SF12">
    <property type="entry name" value="PARVALBUMIN"/>
    <property type="match status" value="1"/>
</dbReference>
<dbReference type="PANTHER" id="PTHR11653">
    <property type="entry name" value="PARVALBUMIN ALPHA"/>
    <property type="match status" value="1"/>
</dbReference>
<dbReference type="Pfam" id="PF13499">
    <property type="entry name" value="EF-hand_7"/>
    <property type="match status" value="1"/>
</dbReference>
<dbReference type="PRINTS" id="PR01697">
    <property type="entry name" value="PARVALBUMIN"/>
</dbReference>
<dbReference type="SMART" id="SM00054">
    <property type="entry name" value="EFh"/>
    <property type="match status" value="2"/>
</dbReference>
<dbReference type="SUPFAM" id="SSF47473">
    <property type="entry name" value="EF-hand"/>
    <property type="match status" value="1"/>
</dbReference>
<dbReference type="PROSITE" id="PS00018">
    <property type="entry name" value="EF_HAND_1"/>
    <property type="match status" value="2"/>
</dbReference>
<dbReference type="PROSITE" id="PS50222">
    <property type="entry name" value="EF_HAND_2"/>
    <property type="match status" value="2"/>
</dbReference>
<sequence length="108" mass="11436">AFAGVLNDADIAAALEACKAADSFNHKAFFAKVGLTSKSADDVKKAFAIIDQDKSGFIEEDELKLFLQNFKADARALTDGETKTFLKAGDSDGDGKIGVDEFTALVKA</sequence>
<organism>
    <name type="scientific">Cyprinus carpio</name>
    <name type="common">Common carp</name>
    <dbReference type="NCBI Taxonomy" id="7962"/>
    <lineage>
        <taxon>Eukaryota</taxon>
        <taxon>Metazoa</taxon>
        <taxon>Chordata</taxon>
        <taxon>Craniata</taxon>
        <taxon>Vertebrata</taxon>
        <taxon>Euteleostomi</taxon>
        <taxon>Actinopterygii</taxon>
        <taxon>Neopterygii</taxon>
        <taxon>Teleostei</taxon>
        <taxon>Ostariophysi</taxon>
        <taxon>Cypriniformes</taxon>
        <taxon>Cyprinidae</taxon>
        <taxon>Cyprininae</taxon>
        <taxon>Cyprinus</taxon>
    </lineage>
</organism>
<accession>P02618</accession>
<keyword id="KW-0002">3D-structure</keyword>
<keyword id="KW-0007">Acetylation</keyword>
<keyword id="KW-0106">Calcium</keyword>
<keyword id="KW-0903">Direct protein sequencing</keyword>
<keyword id="KW-0479">Metal-binding</keyword>
<keyword id="KW-0514">Muscle protein</keyword>
<keyword id="KW-1185">Reference proteome</keyword>
<keyword id="KW-0677">Repeat</keyword>
<feature type="chain" id="PRO_0000073606" description="Parvalbumin beta">
    <location>
        <begin position="1"/>
        <end position="108"/>
    </location>
</feature>
<feature type="domain" description="EF-hand 1" evidence="2">
    <location>
        <begin position="38"/>
        <end position="73"/>
    </location>
</feature>
<feature type="domain" description="EF-hand 2" evidence="2">
    <location>
        <begin position="77"/>
        <end position="108"/>
    </location>
</feature>
<feature type="binding site" evidence="2">
    <location>
        <position position="51"/>
    </location>
    <ligand>
        <name>Ca(2+)</name>
        <dbReference type="ChEBI" id="CHEBI:29108"/>
        <label>1</label>
    </ligand>
</feature>
<feature type="binding site" evidence="2">
    <location>
        <position position="53"/>
    </location>
    <ligand>
        <name>Ca(2+)</name>
        <dbReference type="ChEBI" id="CHEBI:29108"/>
        <label>1</label>
    </ligand>
</feature>
<feature type="binding site" evidence="2">
    <location>
        <position position="55"/>
    </location>
    <ligand>
        <name>Ca(2+)</name>
        <dbReference type="ChEBI" id="CHEBI:29108"/>
        <label>1</label>
    </ligand>
</feature>
<feature type="binding site" evidence="1">
    <location>
        <position position="57"/>
    </location>
    <ligand>
        <name>Ca(2+)</name>
        <dbReference type="ChEBI" id="CHEBI:29108"/>
        <label>1</label>
    </ligand>
</feature>
<feature type="binding site" evidence="1">
    <location>
        <position position="59"/>
    </location>
    <ligand>
        <name>Ca(2+)</name>
        <dbReference type="ChEBI" id="CHEBI:29108"/>
        <label>1</label>
    </ligand>
</feature>
<feature type="binding site" evidence="2">
    <location>
        <position position="62"/>
    </location>
    <ligand>
        <name>Ca(2+)</name>
        <dbReference type="ChEBI" id="CHEBI:29108"/>
        <label>1</label>
    </ligand>
</feature>
<feature type="binding site" evidence="2">
    <location>
        <position position="90"/>
    </location>
    <ligand>
        <name>Ca(2+)</name>
        <dbReference type="ChEBI" id="CHEBI:29108"/>
        <label>2</label>
    </ligand>
</feature>
<feature type="binding site" evidence="2">
    <location>
        <position position="92"/>
    </location>
    <ligand>
        <name>Ca(2+)</name>
        <dbReference type="ChEBI" id="CHEBI:29108"/>
        <label>2</label>
    </ligand>
</feature>
<feature type="binding site" evidence="2">
    <location>
        <position position="94"/>
    </location>
    <ligand>
        <name>Ca(2+)</name>
        <dbReference type="ChEBI" id="CHEBI:29108"/>
        <label>2</label>
    </ligand>
</feature>
<feature type="binding site" evidence="2">
    <location>
        <position position="96"/>
    </location>
    <ligand>
        <name>Ca(2+)</name>
        <dbReference type="ChEBI" id="CHEBI:29108"/>
        <label>2</label>
    </ligand>
</feature>
<feature type="binding site" evidence="2">
    <location>
        <position position="101"/>
    </location>
    <ligand>
        <name>Ca(2+)</name>
        <dbReference type="ChEBI" id="CHEBI:29108"/>
        <label>2</label>
    </ligand>
</feature>
<feature type="modified residue" description="N-acetylalanine" evidence="3">
    <location>
        <position position="1"/>
    </location>
</feature>
<feature type="turn" evidence="5">
    <location>
        <begin position="3"/>
        <end position="5"/>
    </location>
</feature>
<feature type="helix" evidence="5">
    <location>
        <begin position="8"/>
        <end position="17"/>
    </location>
</feature>
<feature type="helix" evidence="5">
    <location>
        <begin position="26"/>
        <end position="32"/>
    </location>
</feature>
<feature type="helix" evidence="5">
    <location>
        <begin position="35"/>
        <end position="37"/>
    </location>
</feature>
<feature type="helix" evidence="5">
    <location>
        <begin position="40"/>
        <end position="50"/>
    </location>
</feature>
<feature type="strand" evidence="5">
    <location>
        <begin position="55"/>
        <end position="58"/>
    </location>
</feature>
<feature type="helix" evidence="5">
    <location>
        <begin position="60"/>
        <end position="64"/>
    </location>
</feature>
<feature type="helix" evidence="5">
    <location>
        <begin position="66"/>
        <end position="69"/>
    </location>
</feature>
<feature type="helix" evidence="5">
    <location>
        <begin position="79"/>
        <end position="89"/>
    </location>
</feature>
<feature type="strand" evidence="5">
    <location>
        <begin position="94"/>
        <end position="97"/>
    </location>
</feature>
<feature type="helix" evidence="5">
    <location>
        <begin position="99"/>
        <end position="107"/>
    </location>
</feature>
<name>PRVB_CYPCA</name>
<protein>
    <recommendedName>
        <fullName>Parvalbumin beta</fullName>
    </recommendedName>
</protein>
<reference key="1">
    <citation type="journal article" date="1973" name="J. Biol. Chem.">
        <title>Carp muscle calcium-binding protein. I. Characterization of the tryptic peptides and the complete amino acid sequence of component B.</title>
        <authorList>
            <person name="Coffee C.J."/>
            <person name="Bradshaw R.A."/>
        </authorList>
    </citation>
    <scope>PROTEIN SEQUENCE</scope>
    <scope>ACETYLATION AT ALA-1</scope>
</reference>
<reference key="2">
    <citation type="journal article" date="1973" name="J. Biol. Chem.">
        <authorList>
            <person name="Coffee C.J."/>
            <person name="Bradshaw R.A."/>
        </authorList>
    </citation>
    <scope>ERRATUM OF PUBMED:4700462</scope>
    <scope>SEQUENCE REVISION</scope>
</reference>
<reference key="3">
    <citation type="journal article" date="1973" name="J. Biol. Chem.">
        <title>Carp muscle calcium-binding protein. II. Structure determination and general description.</title>
        <authorList>
            <person name="Kretsinger R.H."/>
            <person name="Nockolds C.E."/>
        </authorList>
    </citation>
    <scope>X-RAY CRYSTALLOGRAPHY (1.85 ANGSTROMS)</scope>
</reference>
<reference key="4">
    <citation type="journal article" date="1975" name="J. Mol. Biol.">
        <title>Terbium replacement of calcium in carp muscle calcium-binding parvalbumin: an X-ray crystallographic study.</title>
        <authorList>
            <person name="Moews P.C."/>
            <person name="Kretsinger R.H."/>
        </authorList>
    </citation>
    <scope>CRYSTALLIZATION</scope>
</reference>
<reference key="5">
    <citation type="journal article" date="1989" name="J. Biol. Chem.">
        <title>Restrained least squares refinement of native (calcium) and cadmium-substituted carp parvalbumin using X-ray crystallographic data at 1.6-A resolution.</title>
        <authorList>
            <person name="Swain A.L."/>
            <person name="Kretsinger R.H."/>
            <person name="Amma E.L."/>
        </authorList>
    </citation>
    <scope>X-RAY CRYSTALLOGRAPHY (1.6 ANGSTROMS)</scope>
</reference>
<reference key="6">
    <citation type="journal article" date="1990" name="Biochemistry">
        <title>Refined crystal structure of calcium-liganded carp parvalbumin 4.25 at 1.5-A resolution.</title>
        <authorList>
            <person name="Kumar V.D."/>
            <person name="Lee L."/>
            <person name="Edwards B.F.P."/>
        </authorList>
    </citation>
    <scope>X-RAY CRYSTALLOGRAPHY (1.5 ANGSTROMS)</scope>
</reference>
<reference key="7">
    <citation type="journal article" date="1999" name="Structure">
        <title>Metal-ion affinity and specificity in EF-hand proteins: coordination geometry and domain plasticity in parvalbumin.</title>
        <authorList>
            <person name="Cates M.S."/>
            <person name="Berry M.B."/>
            <person name="Ho E.L."/>
            <person name="Li Q."/>
            <person name="Potter J.D."/>
            <person name="Phillips G.N. Jr."/>
        </authorList>
    </citation>
    <scope>X-RAY CRYSTALLOGRAPHY (2.0 ANGSTROMS)</scope>
</reference>
<evidence type="ECO:0000250" key="1">
    <source>
        <dbReference type="UniProtKB" id="P02621"/>
    </source>
</evidence>
<evidence type="ECO:0000255" key="2">
    <source>
        <dbReference type="PROSITE-ProRule" id="PRU00448"/>
    </source>
</evidence>
<evidence type="ECO:0000269" key="3">
    <source>
    </source>
</evidence>
<evidence type="ECO:0000305" key="4"/>
<evidence type="ECO:0007829" key="5">
    <source>
        <dbReference type="PDB" id="4CPV"/>
    </source>
</evidence>